<keyword id="KW-0998">Cell outer membrane</keyword>
<keyword id="KW-0449">Lipoprotein</keyword>
<keyword id="KW-0472">Membrane</keyword>
<keyword id="KW-0564">Palmitate</keyword>
<keyword id="KW-0614">Plasmid</keyword>
<keyword id="KW-0732">Signal</keyword>
<name>LYS8_ECOLX</name>
<accession>P10099</accession>
<reference key="1">
    <citation type="journal article" date="1987" name="Mol. Gen. Genet.">
        <title>Nucleotide sequences from the colicin E8 operon: homology with plasmid ColE2-P9.</title>
        <authorList>
            <person name="Uchimura T."/>
            <person name="Lau P.C.K."/>
        </authorList>
    </citation>
    <scope>NUCLEOTIDE SEQUENCE [GENOMIC DNA]</scope>
</reference>
<reference key="2">
    <citation type="journal article" date="1988" name="J. Bacteriol.">
        <title>Colicin E8, a DNase which indicates an evolutionary relationship between colicins E2 and E3.</title>
        <authorList>
            <person name="Toba M."/>
            <person name="Masaki H."/>
            <person name="Ohta T."/>
        </authorList>
    </citation>
    <scope>NUCLEOTIDE SEQUENCE [GENOMIC DNA]</scope>
</reference>
<feature type="signal peptide" evidence="1">
    <location>
        <begin position="1"/>
        <end position="19"/>
    </location>
</feature>
<feature type="chain" id="PRO_0000005688" description="Lysis protein for colicin E8">
    <location>
        <begin position="20"/>
        <end position="47"/>
    </location>
</feature>
<feature type="lipid moiety-binding region" description="N-palmitoyl cysteine" evidence="1">
    <location>
        <position position="20"/>
    </location>
</feature>
<feature type="lipid moiety-binding region" description="S-diacylglycerol cysteine" evidence="1">
    <location>
        <position position="20"/>
    </location>
</feature>
<comment type="function">
    <text>Lysis proteins are required for both colicin release and partial cell lysis.</text>
</comment>
<comment type="subcellular location">
    <subcellularLocation>
        <location evidence="2">Cell outer membrane</location>
        <topology evidence="1">Lipid-anchor</topology>
    </subcellularLocation>
</comment>
<sequence>MKKITGIILLLLAVIILAACQANYIRDVQGGTVSPSSTAEVTGLATQ</sequence>
<gene>
    <name type="primary">lys</name>
</gene>
<evidence type="ECO:0000255" key="1">
    <source>
        <dbReference type="PROSITE-ProRule" id="PRU00303"/>
    </source>
</evidence>
<evidence type="ECO:0000305" key="2"/>
<geneLocation type="plasmid">
    <name>ColE8</name>
</geneLocation>
<dbReference type="EMBL" id="M21404">
    <property type="protein sequence ID" value="AAA23075.1"/>
    <property type="molecule type" value="Genomic_DNA"/>
</dbReference>
<dbReference type="EMBL" id="X06119">
    <property type="protein sequence ID" value="CAA29493.1"/>
    <property type="molecule type" value="Genomic_DNA"/>
</dbReference>
<dbReference type="PIR" id="C28184">
    <property type="entry name" value="ZHECE8"/>
</dbReference>
<dbReference type="RefSeq" id="WP_001314446.1">
    <property type="nucleotide sequence ID" value="NZ_WQOT01000063.1"/>
</dbReference>
<dbReference type="RefSeq" id="YP_002993421.1">
    <property type="nucleotide sequence ID" value="NC_012882.1"/>
</dbReference>
<dbReference type="GO" id="GO:0009279">
    <property type="term" value="C:cell outer membrane"/>
    <property type="evidence" value="ECO:0007669"/>
    <property type="project" value="UniProtKB-SubCell"/>
</dbReference>
<dbReference type="GO" id="GO:0019835">
    <property type="term" value="P:cytolysis"/>
    <property type="evidence" value="ECO:0007669"/>
    <property type="project" value="InterPro"/>
</dbReference>
<dbReference type="InterPro" id="IPR003059">
    <property type="entry name" value="Lysis_col"/>
</dbReference>
<dbReference type="Pfam" id="PF02402">
    <property type="entry name" value="Lysis_col"/>
    <property type="match status" value="1"/>
</dbReference>
<dbReference type="PRINTS" id="PR01297">
    <property type="entry name" value="LYSISCOLICIN"/>
</dbReference>
<dbReference type="PROSITE" id="PS51257">
    <property type="entry name" value="PROKAR_LIPOPROTEIN"/>
    <property type="match status" value="1"/>
</dbReference>
<protein>
    <recommendedName>
        <fullName>Lysis protein for colicin E8</fullName>
    </recommendedName>
</protein>
<proteinExistence type="inferred from homology"/>
<organism>
    <name type="scientific">Escherichia coli</name>
    <dbReference type="NCBI Taxonomy" id="562"/>
    <lineage>
        <taxon>Bacteria</taxon>
        <taxon>Pseudomonadati</taxon>
        <taxon>Pseudomonadota</taxon>
        <taxon>Gammaproteobacteria</taxon>
        <taxon>Enterobacterales</taxon>
        <taxon>Enterobacteriaceae</taxon>
        <taxon>Escherichia</taxon>
    </lineage>
</organism>